<reference key="1">
    <citation type="journal article" date="2008" name="J. Bacteriol.">
        <title>Genome sequence of Staphylococcus aureus strain Newman and comparative analysis of staphylococcal genomes: polymorphism and evolution of two major pathogenicity islands.</title>
        <authorList>
            <person name="Baba T."/>
            <person name="Bae T."/>
            <person name="Schneewind O."/>
            <person name="Takeuchi F."/>
            <person name="Hiramatsu K."/>
        </authorList>
    </citation>
    <scope>NUCLEOTIDE SEQUENCE [LARGE SCALE GENOMIC DNA]</scope>
    <source>
        <strain>Newman</strain>
    </source>
</reference>
<protein>
    <recommendedName>
        <fullName evidence="1">UPF0637 protein NWMN_0972</fullName>
    </recommendedName>
</protein>
<sequence length="204" mass="24020">MTKYTFKPKDFKAFNVEGLDARMEALNEYIRPQLRELGEYFSDFFTSQTGETFYPHVAKHARRSVNPPKDTWVAFATNKRGYKMLPHFQIGMFEDQLFVMFGIMHEAKDKATRAKVFERKFKAIQQLPDDYRVCLDHMKPDKPFIKDLTDDDLIEAIQRAINVKKGEFFIARAITPQDKRLKSDKAFIAFLEETFDQFLPFYSA</sequence>
<proteinExistence type="inferred from homology"/>
<feature type="chain" id="PRO_0000348330" description="UPF0637 protein NWMN_0972">
    <location>
        <begin position="1"/>
        <end position="204"/>
    </location>
</feature>
<gene>
    <name type="ordered locus">NWMN_0972</name>
</gene>
<comment type="similarity">
    <text evidence="1">Belongs to the UPF0637 family.</text>
</comment>
<accession>A6QFW2</accession>
<organism>
    <name type="scientific">Staphylococcus aureus (strain Newman)</name>
    <dbReference type="NCBI Taxonomy" id="426430"/>
    <lineage>
        <taxon>Bacteria</taxon>
        <taxon>Bacillati</taxon>
        <taxon>Bacillota</taxon>
        <taxon>Bacilli</taxon>
        <taxon>Bacillales</taxon>
        <taxon>Staphylococcaceae</taxon>
        <taxon>Staphylococcus</taxon>
    </lineage>
</organism>
<name>Y972_STAAE</name>
<dbReference type="EMBL" id="AP009351">
    <property type="protein sequence ID" value="BAF67244.1"/>
    <property type="molecule type" value="Genomic_DNA"/>
</dbReference>
<dbReference type="RefSeq" id="WP_000170610.1">
    <property type="nucleotide sequence ID" value="NZ_JBBIAE010000002.1"/>
</dbReference>
<dbReference type="SMR" id="A6QFW2"/>
<dbReference type="KEGG" id="sae:NWMN_0972"/>
<dbReference type="HOGENOM" id="CLU_096059_0_0_9"/>
<dbReference type="Proteomes" id="UP000006386">
    <property type="component" value="Chromosome"/>
</dbReference>
<dbReference type="Gene3D" id="3.30.930.20">
    <property type="entry name" value="Protein of unknown function DUF1054"/>
    <property type="match status" value="1"/>
</dbReference>
<dbReference type="HAMAP" id="MF_01851">
    <property type="entry name" value="UPF0637"/>
    <property type="match status" value="1"/>
</dbReference>
<dbReference type="InterPro" id="IPR009403">
    <property type="entry name" value="UPF0637"/>
</dbReference>
<dbReference type="InterPro" id="IPR053707">
    <property type="entry name" value="UPF0637_domain_sf"/>
</dbReference>
<dbReference type="Pfam" id="PF06335">
    <property type="entry name" value="DUF1054"/>
    <property type="match status" value="1"/>
</dbReference>
<dbReference type="PIRSF" id="PIRSF021332">
    <property type="entry name" value="DUF1054"/>
    <property type="match status" value="1"/>
</dbReference>
<dbReference type="SUPFAM" id="SSF142913">
    <property type="entry name" value="YktB/PF0168-like"/>
    <property type="match status" value="1"/>
</dbReference>
<evidence type="ECO:0000255" key="1">
    <source>
        <dbReference type="HAMAP-Rule" id="MF_01851"/>
    </source>
</evidence>